<protein>
    <recommendedName>
        <fullName evidence="1">Flap endonuclease 1</fullName>
        <shortName evidence="1">FEN-1</shortName>
        <ecNumber evidence="1">3.1.-.-</ecNumber>
    </recommendedName>
    <alternativeName>
        <fullName evidence="1">Flap structure-specific endonuclease 1</fullName>
    </alternativeName>
</protein>
<dbReference type="EC" id="3.1.-.-" evidence="1"/>
<dbReference type="EMBL" id="FN392319">
    <property type="protein sequence ID" value="CAY68494.1"/>
    <property type="molecule type" value="Genomic_DNA"/>
</dbReference>
<dbReference type="RefSeq" id="XP_002490774.1">
    <property type="nucleotide sequence ID" value="XM_002490729.1"/>
</dbReference>
<dbReference type="SMR" id="C4QZ20"/>
<dbReference type="FunCoup" id="C4QZ20">
    <property type="interactions" value="1069"/>
</dbReference>
<dbReference type="STRING" id="644223.C4QZ20"/>
<dbReference type="EnsemblFungi" id="CAY68494">
    <property type="protein sequence ID" value="CAY68494"/>
    <property type="gene ID" value="PAS_chr1-4_0633"/>
</dbReference>
<dbReference type="GeneID" id="8197841"/>
<dbReference type="KEGG" id="ppa:PAS_chr1-4_0633"/>
<dbReference type="eggNOG" id="KOG2519">
    <property type="taxonomic scope" value="Eukaryota"/>
</dbReference>
<dbReference type="HOGENOM" id="CLU_032444_1_1_1"/>
<dbReference type="InParanoid" id="C4QZ20"/>
<dbReference type="OMA" id="MGIPWVQ"/>
<dbReference type="OrthoDB" id="1937206at2759"/>
<dbReference type="Proteomes" id="UP000000314">
    <property type="component" value="Chromosome 1"/>
</dbReference>
<dbReference type="GO" id="GO:0005739">
    <property type="term" value="C:mitochondrion"/>
    <property type="evidence" value="ECO:0007669"/>
    <property type="project" value="UniProtKB-SubCell"/>
</dbReference>
<dbReference type="GO" id="GO:0005730">
    <property type="term" value="C:nucleolus"/>
    <property type="evidence" value="ECO:0007669"/>
    <property type="project" value="UniProtKB-SubCell"/>
</dbReference>
<dbReference type="GO" id="GO:0005654">
    <property type="term" value="C:nucleoplasm"/>
    <property type="evidence" value="ECO:0007669"/>
    <property type="project" value="UniProtKB-SubCell"/>
</dbReference>
<dbReference type="GO" id="GO:0008409">
    <property type="term" value="F:5'-3' exonuclease activity"/>
    <property type="evidence" value="ECO:0007669"/>
    <property type="project" value="UniProtKB-UniRule"/>
</dbReference>
<dbReference type="GO" id="GO:0017108">
    <property type="term" value="F:5'-flap endonuclease activity"/>
    <property type="evidence" value="ECO:0007669"/>
    <property type="project" value="UniProtKB-UniRule"/>
</dbReference>
<dbReference type="GO" id="GO:0003677">
    <property type="term" value="F:DNA binding"/>
    <property type="evidence" value="ECO:0007669"/>
    <property type="project" value="UniProtKB-UniRule"/>
</dbReference>
<dbReference type="GO" id="GO:0000287">
    <property type="term" value="F:magnesium ion binding"/>
    <property type="evidence" value="ECO:0007669"/>
    <property type="project" value="UniProtKB-UniRule"/>
</dbReference>
<dbReference type="GO" id="GO:0006284">
    <property type="term" value="P:base-excision repair"/>
    <property type="evidence" value="ECO:0007669"/>
    <property type="project" value="UniProtKB-UniRule"/>
</dbReference>
<dbReference type="GO" id="GO:0043137">
    <property type="term" value="P:DNA replication, removal of RNA primer"/>
    <property type="evidence" value="ECO:0007669"/>
    <property type="project" value="UniProtKB-UniRule"/>
</dbReference>
<dbReference type="CDD" id="cd09907">
    <property type="entry name" value="H3TH_FEN1-Euk"/>
    <property type="match status" value="1"/>
</dbReference>
<dbReference type="CDD" id="cd09867">
    <property type="entry name" value="PIN_FEN1"/>
    <property type="match status" value="1"/>
</dbReference>
<dbReference type="FunFam" id="1.10.150.20:FF:000009">
    <property type="entry name" value="Flap endonuclease 1"/>
    <property type="match status" value="1"/>
</dbReference>
<dbReference type="FunFam" id="3.40.50.1010:FF:000003">
    <property type="entry name" value="Flap endonuclease 1"/>
    <property type="match status" value="1"/>
</dbReference>
<dbReference type="Gene3D" id="1.10.150.20">
    <property type="entry name" value="5' to 3' exonuclease, C-terminal subdomain"/>
    <property type="match status" value="1"/>
</dbReference>
<dbReference type="Gene3D" id="3.40.50.1010">
    <property type="entry name" value="5'-nuclease"/>
    <property type="match status" value="1"/>
</dbReference>
<dbReference type="HAMAP" id="MF_00614">
    <property type="entry name" value="Fen"/>
    <property type="match status" value="1"/>
</dbReference>
<dbReference type="InterPro" id="IPR036279">
    <property type="entry name" value="5-3_exonuclease_C_sf"/>
</dbReference>
<dbReference type="InterPro" id="IPR023426">
    <property type="entry name" value="Flap_endonuc"/>
</dbReference>
<dbReference type="InterPro" id="IPR008918">
    <property type="entry name" value="HhH2"/>
</dbReference>
<dbReference type="InterPro" id="IPR029060">
    <property type="entry name" value="PIN-like_dom_sf"/>
</dbReference>
<dbReference type="InterPro" id="IPR006086">
    <property type="entry name" value="XPG-I_dom"/>
</dbReference>
<dbReference type="InterPro" id="IPR006084">
    <property type="entry name" value="XPG/Rad2"/>
</dbReference>
<dbReference type="InterPro" id="IPR019974">
    <property type="entry name" value="XPG_CS"/>
</dbReference>
<dbReference type="InterPro" id="IPR006085">
    <property type="entry name" value="XPG_DNA_repair_N"/>
</dbReference>
<dbReference type="PANTHER" id="PTHR11081:SF9">
    <property type="entry name" value="FLAP ENDONUCLEASE 1"/>
    <property type="match status" value="1"/>
</dbReference>
<dbReference type="PANTHER" id="PTHR11081">
    <property type="entry name" value="FLAP ENDONUCLEASE FAMILY MEMBER"/>
    <property type="match status" value="1"/>
</dbReference>
<dbReference type="Pfam" id="PF00867">
    <property type="entry name" value="XPG_I"/>
    <property type="match status" value="1"/>
</dbReference>
<dbReference type="Pfam" id="PF00752">
    <property type="entry name" value="XPG_N"/>
    <property type="match status" value="1"/>
</dbReference>
<dbReference type="PRINTS" id="PR00853">
    <property type="entry name" value="XPGRADSUPER"/>
</dbReference>
<dbReference type="SMART" id="SM00279">
    <property type="entry name" value="HhH2"/>
    <property type="match status" value="1"/>
</dbReference>
<dbReference type="SMART" id="SM00484">
    <property type="entry name" value="XPGI"/>
    <property type="match status" value="1"/>
</dbReference>
<dbReference type="SMART" id="SM00485">
    <property type="entry name" value="XPGN"/>
    <property type="match status" value="1"/>
</dbReference>
<dbReference type="SUPFAM" id="SSF47807">
    <property type="entry name" value="5' to 3' exonuclease, C-terminal subdomain"/>
    <property type="match status" value="1"/>
</dbReference>
<dbReference type="SUPFAM" id="SSF88723">
    <property type="entry name" value="PIN domain-like"/>
    <property type="match status" value="1"/>
</dbReference>
<dbReference type="PROSITE" id="PS00841">
    <property type="entry name" value="XPG_1"/>
    <property type="match status" value="1"/>
</dbReference>
<dbReference type="PROSITE" id="PS00842">
    <property type="entry name" value="XPG_2"/>
    <property type="match status" value="1"/>
</dbReference>
<reference key="1">
    <citation type="journal article" date="2009" name="Nat. Biotechnol.">
        <title>Genome sequence of the recombinant protein production host Pichia pastoris.</title>
        <authorList>
            <person name="De Schutter K."/>
            <person name="Lin Y.-C."/>
            <person name="Tiels P."/>
            <person name="Van Hecke A."/>
            <person name="Glinka S."/>
            <person name="Weber-Lehmann J."/>
            <person name="Rouze P."/>
            <person name="Van de Peer Y."/>
            <person name="Callewaert N."/>
        </authorList>
    </citation>
    <scope>NUCLEOTIDE SEQUENCE [LARGE SCALE GENOMIC DNA]</scope>
    <source>
        <strain>GS115 / ATCC 20864</strain>
    </source>
</reference>
<comment type="function">
    <text evidence="1">Structure-specific nuclease with 5'-flap endonuclease and 5'-3' exonuclease activities involved in DNA replication and repair. During DNA replication, cleaves the 5'-overhanging flap structure that is generated by displacement synthesis when DNA polymerase encounters the 5'-end of a downstream Okazaki fragment. It enters the flap from the 5'-end and then tracks to cleave the flap base, leaving a nick for ligation. Also involved in the long patch base excision repair (LP-BER) pathway, by cleaving within the apurinic/apyrimidinic (AP) site-terminated flap. Acts as a genome stabilization factor that prevents flaps from equilibrating into structures that lead to duplications and deletions. Also possesses 5'-3' exonuclease activity on nicked or gapped double-stranded DNA, and exhibits RNase H activity. Also involved in replication and repair of rDNA and in repairing mitochondrial DNA.</text>
</comment>
<comment type="cofactor">
    <cofactor evidence="1">
        <name>Mg(2+)</name>
        <dbReference type="ChEBI" id="CHEBI:18420"/>
    </cofactor>
    <text evidence="1">Binds 2 magnesium ions per subunit. They probably participate in the reaction catalyzed by the enzyme. May bind an additional third magnesium ion after substrate binding.</text>
</comment>
<comment type="subunit">
    <text evidence="1">Interacts with PCNA. Three molecules of FEN1 bind to one PCNA trimer with each molecule binding to one PCNA monomer. PCNA stimulates the nuclease activity without altering cleavage specificity.</text>
</comment>
<comment type="subcellular location">
    <subcellularLocation>
        <location evidence="1">Nucleus</location>
        <location evidence="1">Nucleolus</location>
    </subcellularLocation>
    <subcellularLocation>
        <location evidence="1">Nucleus</location>
        <location evidence="1">Nucleoplasm</location>
    </subcellularLocation>
    <subcellularLocation>
        <location evidence="1">Mitochondrion</location>
    </subcellularLocation>
    <text evidence="1">Resides mostly in the nucleoli and relocalizes to the nucleoplasm upon DNA damage.</text>
</comment>
<comment type="PTM">
    <text evidence="1">Phosphorylated. Phosphorylation upon DNA damage induces relocalization to the nuclear plasma.</text>
</comment>
<comment type="similarity">
    <text evidence="1">Belongs to the XPG/RAD2 endonuclease family. FEN1 subfamily.</text>
</comment>
<gene>
    <name evidence="1" type="primary">FEN1</name>
    <name type="ordered locus">PAS_chr1-4_0633</name>
</gene>
<accession>C4QZ20</accession>
<name>FEN1_KOMPG</name>
<keyword id="KW-0227">DNA damage</keyword>
<keyword id="KW-0234">DNA repair</keyword>
<keyword id="KW-0235">DNA replication</keyword>
<keyword id="KW-0255">Endonuclease</keyword>
<keyword id="KW-0269">Exonuclease</keyword>
<keyword id="KW-0378">Hydrolase</keyword>
<keyword id="KW-0460">Magnesium</keyword>
<keyword id="KW-0479">Metal-binding</keyword>
<keyword id="KW-0496">Mitochondrion</keyword>
<keyword id="KW-0540">Nuclease</keyword>
<keyword id="KW-0539">Nucleus</keyword>
<keyword id="KW-0597">Phosphoprotein</keyword>
<keyword id="KW-1185">Reference proteome</keyword>
<proteinExistence type="inferred from homology"/>
<feature type="chain" id="PRO_0000403593" description="Flap endonuclease 1">
    <location>
        <begin position="1"/>
        <end position="373"/>
    </location>
</feature>
<feature type="region of interest" description="N-domain">
    <location>
        <begin position="1"/>
        <end position="105"/>
    </location>
</feature>
<feature type="region of interest" description="I-domain">
    <location>
        <begin position="123"/>
        <end position="254"/>
    </location>
</feature>
<feature type="region of interest" description="Interaction with PCNA" evidence="1">
    <location>
        <begin position="340"/>
        <end position="348"/>
    </location>
</feature>
<feature type="region of interest" description="Disordered" evidence="2">
    <location>
        <begin position="347"/>
        <end position="373"/>
    </location>
</feature>
<feature type="binding site" evidence="1">
    <location>
        <position position="34"/>
    </location>
    <ligand>
        <name>Mg(2+)</name>
        <dbReference type="ChEBI" id="CHEBI:18420"/>
        <label>1</label>
    </ligand>
</feature>
<feature type="binding site" evidence="1">
    <location>
        <position position="47"/>
    </location>
    <ligand>
        <name>DNA</name>
        <dbReference type="ChEBI" id="CHEBI:16991"/>
    </ligand>
</feature>
<feature type="binding site" evidence="1">
    <location>
        <position position="71"/>
    </location>
    <ligand>
        <name>DNA</name>
        <dbReference type="ChEBI" id="CHEBI:16991"/>
    </ligand>
</feature>
<feature type="binding site" evidence="1">
    <location>
        <position position="87"/>
    </location>
    <ligand>
        <name>Mg(2+)</name>
        <dbReference type="ChEBI" id="CHEBI:18420"/>
        <label>1</label>
    </ligand>
</feature>
<feature type="binding site" evidence="1">
    <location>
        <position position="159"/>
    </location>
    <ligand>
        <name>DNA</name>
        <dbReference type="ChEBI" id="CHEBI:16991"/>
    </ligand>
</feature>
<feature type="binding site" evidence="1">
    <location>
        <position position="159"/>
    </location>
    <ligand>
        <name>Mg(2+)</name>
        <dbReference type="ChEBI" id="CHEBI:18420"/>
        <label>1</label>
    </ligand>
</feature>
<feature type="binding site" evidence="1">
    <location>
        <position position="161"/>
    </location>
    <ligand>
        <name>Mg(2+)</name>
        <dbReference type="ChEBI" id="CHEBI:18420"/>
        <label>1</label>
    </ligand>
</feature>
<feature type="binding site" evidence="1">
    <location>
        <position position="180"/>
    </location>
    <ligand>
        <name>Mg(2+)</name>
        <dbReference type="ChEBI" id="CHEBI:18420"/>
        <label>2</label>
    </ligand>
</feature>
<feature type="binding site" evidence="1">
    <location>
        <position position="182"/>
    </location>
    <ligand>
        <name>Mg(2+)</name>
        <dbReference type="ChEBI" id="CHEBI:18420"/>
        <label>2</label>
    </ligand>
</feature>
<feature type="binding site" evidence="1">
    <location>
        <position position="232"/>
    </location>
    <ligand>
        <name>DNA</name>
        <dbReference type="ChEBI" id="CHEBI:16991"/>
    </ligand>
</feature>
<feature type="binding site" evidence="1">
    <location>
        <position position="234"/>
    </location>
    <ligand>
        <name>DNA</name>
        <dbReference type="ChEBI" id="CHEBI:16991"/>
    </ligand>
</feature>
<feature type="binding site" evidence="1">
    <location>
        <position position="234"/>
    </location>
    <ligand>
        <name>Mg(2+)</name>
        <dbReference type="ChEBI" id="CHEBI:18420"/>
        <label>2</label>
    </ligand>
</feature>
<evidence type="ECO:0000255" key="1">
    <source>
        <dbReference type="HAMAP-Rule" id="MF_03140"/>
    </source>
</evidence>
<evidence type="ECO:0000256" key="2">
    <source>
        <dbReference type="SAM" id="MobiDB-lite"/>
    </source>
</evidence>
<organism>
    <name type="scientific">Komagataella phaffii (strain GS115 / ATCC 20864)</name>
    <name type="common">Yeast</name>
    <name type="synonym">Pichia pastoris</name>
    <dbReference type="NCBI Taxonomy" id="644223"/>
    <lineage>
        <taxon>Eukaryota</taxon>
        <taxon>Fungi</taxon>
        <taxon>Dikarya</taxon>
        <taxon>Ascomycota</taxon>
        <taxon>Saccharomycotina</taxon>
        <taxon>Pichiomycetes</taxon>
        <taxon>Pichiales</taxon>
        <taxon>Pichiaceae</taxon>
        <taxon>Komagataella</taxon>
    </lineage>
</organism>
<sequence length="373" mass="42592">MGIKGLNALINEHSPKAFRNGEMKTFFGRKVAIDASMCLYQFLIAVRQQDGQQLANEEGETTSHLMGFFYRTIRMVGYGIKPCYVFDGKPPVLKGGELEKRLKRREEAEKQRLDMKETGTLADIAKFERRTVRVTREQNDQAKKLLELMGIPYVDAPCEAEAQCAELAKGGKVYAAASEDMDTLCYETPYLLRHMTTAEARKLPVTEIDYAKVMEGLEMELPQFIDLCILLGCDYCETIKGVGPVTAFKLIKEHGSIEKVVEAIENNPKSKQKIPENWPYNEARELFLHPEVIPASECELEWKEPDEEALVDYMVRQHGFSEQRIRDGASKLRKSLKTGTQGRLDKFFVVKKRPAEEKKGKNTKEEKPKKKRK</sequence>